<dbReference type="EMBL" id="CM003150">
    <property type="protein sequence ID" value="KIS67863.1"/>
    <property type="molecule type" value="Genomic_DNA"/>
</dbReference>
<dbReference type="RefSeq" id="XP_011390394.1">
    <property type="nucleotide sequence ID" value="XM_011392092.1"/>
</dbReference>
<dbReference type="SMR" id="Q4P7J4"/>
<dbReference type="FunCoup" id="Q4P7J4">
    <property type="interactions" value="199"/>
</dbReference>
<dbReference type="STRING" id="237631.Q4P7J4"/>
<dbReference type="EnsemblFungi" id="KIS67863">
    <property type="protein sequence ID" value="KIS67863"/>
    <property type="gene ID" value="UMAG_03919"/>
</dbReference>
<dbReference type="GeneID" id="23564242"/>
<dbReference type="KEGG" id="uma:UMAG_03919"/>
<dbReference type="VEuPathDB" id="FungiDB:UMAG_03919"/>
<dbReference type="eggNOG" id="KOG3364">
    <property type="taxonomic scope" value="Eukaryota"/>
</dbReference>
<dbReference type="HOGENOM" id="CLU_104368_2_0_1"/>
<dbReference type="InParanoid" id="Q4P7J4"/>
<dbReference type="OMA" id="QFNYAWG"/>
<dbReference type="OrthoDB" id="421154at2759"/>
<dbReference type="Proteomes" id="UP000000561">
    <property type="component" value="Chromosome 11"/>
</dbReference>
<dbReference type="GO" id="GO:0005741">
    <property type="term" value="C:mitochondrial outer membrane"/>
    <property type="evidence" value="ECO:0000318"/>
    <property type="project" value="GO_Central"/>
</dbReference>
<dbReference type="GO" id="GO:0005778">
    <property type="term" value="C:peroxisomal membrane"/>
    <property type="evidence" value="ECO:0000318"/>
    <property type="project" value="GO_Central"/>
</dbReference>
<dbReference type="GO" id="GO:0008289">
    <property type="term" value="F:lipid binding"/>
    <property type="evidence" value="ECO:0000318"/>
    <property type="project" value="GO_Central"/>
</dbReference>
<dbReference type="GO" id="GO:0060090">
    <property type="term" value="F:molecular adaptor activity"/>
    <property type="evidence" value="ECO:0000318"/>
    <property type="project" value="GO_Central"/>
</dbReference>
<dbReference type="GO" id="GO:0000266">
    <property type="term" value="P:mitochondrial fission"/>
    <property type="evidence" value="ECO:0000318"/>
    <property type="project" value="GO_Central"/>
</dbReference>
<dbReference type="GO" id="GO:0016559">
    <property type="term" value="P:peroxisome fission"/>
    <property type="evidence" value="ECO:0000318"/>
    <property type="project" value="GO_Central"/>
</dbReference>
<dbReference type="CDD" id="cd12212">
    <property type="entry name" value="Fis1"/>
    <property type="match status" value="1"/>
</dbReference>
<dbReference type="FunFam" id="1.25.40.10:FF:000179">
    <property type="entry name" value="Mitochondrial fission 1 protein"/>
    <property type="match status" value="1"/>
</dbReference>
<dbReference type="Gene3D" id="1.25.40.10">
    <property type="entry name" value="Tetratricopeptide repeat domain"/>
    <property type="match status" value="1"/>
</dbReference>
<dbReference type="InterPro" id="IPR016543">
    <property type="entry name" value="Fis1"/>
</dbReference>
<dbReference type="InterPro" id="IPR033745">
    <property type="entry name" value="Fis1_cytosol"/>
</dbReference>
<dbReference type="InterPro" id="IPR028061">
    <property type="entry name" value="Fis1_TPR_C"/>
</dbReference>
<dbReference type="InterPro" id="IPR028058">
    <property type="entry name" value="Fis1_TPR_N"/>
</dbReference>
<dbReference type="InterPro" id="IPR011990">
    <property type="entry name" value="TPR-like_helical_dom_sf"/>
</dbReference>
<dbReference type="PANTHER" id="PTHR13247:SF0">
    <property type="entry name" value="MITOCHONDRIAL FISSION 1 PROTEIN"/>
    <property type="match status" value="1"/>
</dbReference>
<dbReference type="PANTHER" id="PTHR13247">
    <property type="entry name" value="TETRATRICOPEPTIDE REPEAT PROTEIN 11 TPR REPEAT PROTEIN 11"/>
    <property type="match status" value="1"/>
</dbReference>
<dbReference type="Pfam" id="PF14853">
    <property type="entry name" value="Fis1_TPR_C"/>
    <property type="match status" value="1"/>
</dbReference>
<dbReference type="Pfam" id="PF14852">
    <property type="entry name" value="Fis1_TPR_N"/>
    <property type="match status" value="1"/>
</dbReference>
<dbReference type="PIRSF" id="PIRSF008835">
    <property type="entry name" value="TPR_repeat_11_Fis1"/>
    <property type="match status" value="1"/>
</dbReference>
<dbReference type="SUPFAM" id="SSF48452">
    <property type="entry name" value="TPR-like"/>
    <property type="match status" value="1"/>
</dbReference>
<sequence>MSLPYAADAETSLSPSELQVLKSQYETELASGHVTTQTKFNYAWGLVKSKQRAEMSIGVGLLTEIYRSDPPRRRECLYYLSLGHYKMGNYDEARRFNALLIEREPNNLQAQSLNQLIEKGVAREGYIGMALIGGAAAVASIAIAGLMRRGRR</sequence>
<reference key="1">
    <citation type="journal article" date="2006" name="Nature">
        <title>Insights from the genome of the biotrophic fungal plant pathogen Ustilago maydis.</title>
        <authorList>
            <person name="Kaemper J."/>
            <person name="Kahmann R."/>
            <person name="Boelker M."/>
            <person name="Ma L.-J."/>
            <person name="Brefort T."/>
            <person name="Saville B.J."/>
            <person name="Banuett F."/>
            <person name="Kronstad J.W."/>
            <person name="Gold S.E."/>
            <person name="Mueller O."/>
            <person name="Perlin M.H."/>
            <person name="Woesten H.A.B."/>
            <person name="de Vries R."/>
            <person name="Ruiz-Herrera J."/>
            <person name="Reynaga-Pena C.G."/>
            <person name="Snetselaar K."/>
            <person name="McCann M."/>
            <person name="Perez-Martin J."/>
            <person name="Feldbruegge M."/>
            <person name="Basse C.W."/>
            <person name="Steinberg G."/>
            <person name="Ibeas J.I."/>
            <person name="Holloman W."/>
            <person name="Guzman P."/>
            <person name="Farman M.L."/>
            <person name="Stajich J.E."/>
            <person name="Sentandreu R."/>
            <person name="Gonzalez-Prieto J.M."/>
            <person name="Kennell J.C."/>
            <person name="Molina L."/>
            <person name="Schirawski J."/>
            <person name="Mendoza-Mendoza A."/>
            <person name="Greilinger D."/>
            <person name="Muench K."/>
            <person name="Roessel N."/>
            <person name="Scherer M."/>
            <person name="Vranes M."/>
            <person name="Ladendorf O."/>
            <person name="Vincon V."/>
            <person name="Fuchs U."/>
            <person name="Sandrock B."/>
            <person name="Meng S."/>
            <person name="Ho E.C.H."/>
            <person name="Cahill M.J."/>
            <person name="Boyce K.J."/>
            <person name="Klose J."/>
            <person name="Klosterman S.J."/>
            <person name="Deelstra H.J."/>
            <person name="Ortiz-Castellanos L."/>
            <person name="Li W."/>
            <person name="Sanchez-Alonso P."/>
            <person name="Schreier P.H."/>
            <person name="Haeuser-Hahn I."/>
            <person name="Vaupel M."/>
            <person name="Koopmann E."/>
            <person name="Friedrich G."/>
            <person name="Voss H."/>
            <person name="Schlueter T."/>
            <person name="Margolis J."/>
            <person name="Platt D."/>
            <person name="Swimmer C."/>
            <person name="Gnirke A."/>
            <person name="Chen F."/>
            <person name="Vysotskaia V."/>
            <person name="Mannhaupt G."/>
            <person name="Gueldener U."/>
            <person name="Muensterkoetter M."/>
            <person name="Haase D."/>
            <person name="Oesterheld M."/>
            <person name="Mewes H.-W."/>
            <person name="Mauceli E.W."/>
            <person name="DeCaprio D."/>
            <person name="Wade C.M."/>
            <person name="Butler J."/>
            <person name="Young S.K."/>
            <person name="Jaffe D.B."/>
            <person name="Calvo S.E."/>
            <person name="Nusbaum C."/>
            <person name="Galagan J.E."/>
            <person name="Birren B.W."/>
        </authorList>
    </citation>
    <scope>NUCLEOTIDE SEQUENCE [LARGE SCALE GENOMIC DNA]</scope>
    <source>
        <strain>DSM 14603 / FGSC 9021 / UM521</strain>
    </source>
</reference>
<reference key="2">
    <citation type="submission" date="2014-09" db="EMBL/GenBank/DDBJ databases">
        <authorList>
            <person name="Gueldener U."/>
            <person name="Muensterkoetter M."/>
            <person name="Walter M.C."/>
            <person name="Mannhaupt G."/>
            <person name="Kahmann R."/>
        </authorList>
    </citation>
    <scope>GENOME REANNOTATION</scope>
    <source>
        <strain>DSM 14603 / FGSC 9021 / UM521</strain>
    </source>
</reference>
<gene>
    <name type="primary">FIS1</name>
    <name type="ORF">UMAG_03919</name>
</gene>
<protein>
    <recommendedName>
        <fullName>Mitochondrial fission 1 protein</fullName>
    </recommendedName>
</protein>
<evidence type="ECO:0000250" key="1"/>
<evidence type="ECO:0000255" key="2"/>
<evidence type="ECO:0000305" key="3"/>
<proteinExistence type="inferred from homology"/>
<comment type="function">
    <text evidence="1">Has a role in mitochondrial fission. Has a role in outer membrane fission but not matrix separation (By similarity).</text>
</comment>
<comment type="subcellular location">
    <subcellularLocation>
        <location evidence="1">Mitochondrion outer membrane</location>
        <topology evidence="1">Single-pass membrane protein</topology>
    </subcellularLocation>
</comment>
<comment type="domain">
    <text evidence="1">The C-terminus is required for mitochondrial localization, while the N-terminus is necessary for mitochondrial fission.</text>
</comment>
<comment type="similarity">
    <text evidence="3">Belongs to the FIS1 family.</text>
</comment>
<keyword id="KW-0472">Membrane</keyword>
<keyword id="KW-0496">Mitochondrion</keyword>
<keyword id="KW-1000">Mitochondrion outer membrane</keyword>
<keyword id="KW-1185">Reference proteome</keyword>
<keyword id="KW-0677">Repeat</keyword>
<keyword id="KW-0802">TPR repeat</keyword>
<keyword id="KW-0812">Transmembrane</keyword>
<keyword id="KW-1133">Transmembrane helix</keyword>
<accession>Q4P7J4</accession>
<accession>A0A0D1CMB6</accession>
<name>FIS1_MYCMD</name>
<organism>
    <name type="scientific">Mycosarcoma maydis</name>
    <name type="common">Corn smut fungus</name>
    <name type="synonym">Ustilago maydis</name>
    <dbReference type="NCBI Taxonomy" id="5270"/>
    <lineage>
        <taxon>Eukaryota</taxon>
        <taxon>Fungi</taxon>
        <taxon>Dikarya</taxon>
        <taxon>Basidiomycota</taxon>
        <taxon>Ustilaginomycotina</taxon>
        <taxon>Ustilaginomycetes</taxon>
        <taxon>Ustilaginales</taxon>
        <taxon>Ustilaginaceae</taxon>
        <taxon>Mycosarcoma</taxon>
    </lineage>
</organism>
<feature type="chain" id="PRO_0000256191" description="Mitochondrial fission 1 protein">
    <location>
        <begin position="1"/>
        <end position="152"/>
    </location>
</feature>
<feature type="topological domain" description="Cytoplasmic" evidence="2">
    <location>
        <begin position="1"/>
        <end position="126"/>
    </location>
</feature>
<feature type="transmembrane region" description="Helical" evidence="2">
    <location>
        <begin position="127"/>
        <end position="147"/>
    </location>
</feature>
<feature type="topological domain" description="Mitochondrial intermembrane" evidence="2">
    <location>
        <begin position="148"/>
        <end position="152"/>
    </location>
</feature>
<feature type="repeat" description="TPR">
    <location>
        <begin position="74"/>
        <end position="107"/>
    </location>
</feature>